<dbReference type="EC" id="1.4.3.2" evidence="3"/>
<dbReference type="EMBL" id="AY053450">
    <property type="protein sequence ID" value="AAL14831.1"/>
    <property type="molecule type" value="Genomic_DNA"/>
</dbReference>
<dbReference type="PDB" id="2JAE">
    <property type="method" value="X-ray"/>
    <property type="resolution" value="1.25 A"/>
    <property type="chains" value="A/B=46-534"/>
</dbReference>
<dbReference type="PDB" id="2JB1">
    <property type="method" value="X-ray"/>
    <property type="resolution" value="1.55 A"/>
    <property type="chains" value="A/B=46-534"/>
</dbReference>
<dbReference type="PDB" id="2JB2">
    <property type="method" value="X-ray"/>
    <property type="resolution" value="1.45 A"/>
    <property type="chains" value="A/B=46-534"/>
</dbReference>
<dbReference type="PDB" id="2JB3">
    <property type="method" value="X-ray"/>
    <property type="resolution" value="1.85 A"/>
    <property type="chains" value="A/B=46-534"/>
</dbReference>
<dbReference type="PDBsum" id="2JAE"/>
<dbReference type="PDBsum" id="2JB1"/>
<dbReference type="PDBsum" id="2JB2"/>
<dbReference type="PDBsum" id="2JB3"/>
<dbReference type="SMR" id="Q8VPD4"/>
<dbReference type="BRENDA" id="1.4.3.2">
    <property type="organism ID" value="4353"/>
</dbReference>
<dbReference type="STRENDA-DB" id="WCTBE4">
    <property type="experiment" value="Enzyme kinetics for L-amino acid oxidase from Rhodococcus opacus"/>
</dbReference>
<dbReference type="EvolutionaryTrace" id="Q8VPD4"/>
<dbReference type="GO" id="GO:0005737">
    <property type="term" value="C:cytoplasm"/>
    <property type="evidence" value="ECO:0007669"/>
    <property type="project" value="UniProtKB-SubCell"/>
</dbReference>
<dbReference type="GO" id="GO:0050025">
    <property type="term" value="F:L-glutamate oxidase activity"/>
    <property type="evidence" value="ECO:0007669"/>
    <property type="project" value="RHEA"/>
</dbReference>
<dbReference type="GO" id="GO:0050029">
    <property type="term" value="F:L-lysine oxidase activity"/>
    <property type="evidence" value="ECO:0007669"/>
    <property type="project" value="RHEA"/>
</dbReference>
<dbReference type="GO" id="GO:0106329">
    <property type="term" value="F:L-phenylalaine oxidase activity"/>
    <property type="evidence" value="ECO:0007669"/>
    <property type="project" value="RHEA"/>
</dbReference>
<dbReference type="GO" id="GO:0000166">
    <property type="term" value="F:nucleotide binding"/>
    <property type="evidence" value="ECO:0007669"/>
    <property type="project" value="UniProtKB-KW"/>
</dbReference>
<dbReference type="GO" id="GO:0009063">
    <property type="term" value="P:amino acid catabolic process"/>
    <property type="evidence" value="ECO:0007669"/>
    <property type="project" value="TreeGrafter"/>
</dbReference>
<dbReference type="Gene3D" id="1.20.1440.240">
    <property type="match status" value="1"/>
</dbReference>
<dbReference type="Gene3D" id="3.90.660.10">
    <property type="match status" value="1"/>
</dbReference>
<dbReference type="Gene3D" id="3.50.50.60">
    <property type="entry name" value="FAD/NAD(P)-binding domain"/>
    <property type="match status" value="1"/>
</dbReference>
<dbReference type="InterPro" id="IPR002937">
    <property type="entry name" value="Amino_oxidase"/>
</dbReference>
<dbReference type="InterPro" id="IPR036188">
    <property type="entry name" value="FAD/NAD-bd_sf"/>
</dbReference>
<dbReference type="InterPro" id="IPR050281">
    <property type="entry name" value="Flavin_monoamine_oxidase"/>
</dbReference>
<dbReference type="InterPro" id="IPR006311">
    <property type="entry name" value="TAT_signal"/>
</dbReference>
<dbReference type="PANTHER" id="PTHR10742:SF342">
    <property type="entry name" value="AMINE OXIDASE"/>
    <property type="match status" value="1"/>
</dbReference>
<dbReference type="PANTHER" id="PTHR10742">
    <property type="entry name" value="FLAVIN MONOAMINE OXIDASE"/>
    <property type="match status" value="1"/>
</dbReference>
<dbReference type="Pfam" id="PF01593">
    <property type="entry name" value="Amino_oxidase"/>
    <property type="match status" value="1"/>
</dbReference>
<dbReference type="PRINTS" id="PR00419">
    <property type="entry name" value="ADXRDTASE"/>
</dbReference>
<dbReference type="SUPFAM" id="SSF54373">
    <property type="entry name" value="FAD-linked reductases, C-terminal domain"/>
    <property type="match status" value="1"/>
</dbReference>
<dbReference type="SUPFAM" id="SSF51905">
    <property type="entry name" value="FAD/NAD(P)-binding domain"/>
    <property type="match status" value="1"/>
</dbReference>
<dbReference type="PROSITE" id="PS51318">
    <property type="entry name" value="TAT"/>
    <property type="match status" value="1"/>
</dbReference>
<organism>
    <name type="scientific">Rhodococcus opacus</name>
    <name type="common">Nocardia opaca</name>
    <dbReference type="NCBI Taxonomy" id="37919"/>
    <lineage>
        <taxon>Bacteria</taxon>
        <taxon>Bacillati</taxon>
        <taxon>Actinomycetota</taxon>
        <taxon>Actinomycetes</taxon>
        <taxon>Mycobacteriales</taxon>
        <taxon>Nocardiaceae</taxon>
        <taxon>Rhodococcus</taxon>
    </lineage>
</organism>
<proteinExistence type="evidence at protein level"/>
<feature type="signal peptide" description="Tat-type signal" evidence="3">
    <location>
        <begin position="1"/>
        <end position="45"/>
    </location>
</feature>
<feature type="chain" id="PRO_0000448256" description="L-amino acid oxidase" evidence="7">
    <location>
        <begin position="46"/>
        <end position="534"/>
    </location>
</feature>
<feature type="binding site" evidence="2 9 10 11 12">
    <location>
        <begin position="66"/>
        <end position="67"/>
    </location>
    <ligand>
        <name>FAD</name>
        <dbReference type="ChEBI" id="CHEBI:57692"/>
    </ligand>
</feature>
<feature type="binding site" evidence="2 9 10 11 12">
    <location>
        <begin position="86"/>
        <end position="88"/>
    </location>
    <ligand>
        <name>FAD</name>
        <dbReference type="ChEBI" id="CHEBI:57692"/>
    </ligand>
</feature>
<feature type="binding site" evidence="2 9 10 11 12">
    <location>
        <position position="94"/>
    </location>
    <ligand>
        <name>FAD</name>
        <dbReference type="ChEBI" id="CHEBI:57692"/>
    </ligand>
</feature>
<feature type="binding site" evidence="2 9 10 11 12">
    <location>
        <begin position="125"/>
        <end position="128"/>
    </location>
    <ligand>
        <name>FAD</name>
        <dbReference type="ChEBI" id="CHEBI:57692"/>
    </ligand>
</feature>
<feature type="binding site" evidence="2 10 11">
    <location>
        <position position="128"/>
    </location>
    <ligand>
        <name>substrate</name>
    </ligand>
</feature>
<feature type="binding site" evidence="2 10 11">
    <location>
        <position position="272"/>
    </location>
    <ligand>
        <name>substrate</name>
    </ligand>
</feature>
<feature type="binding site" evidence="2 9 10 11 12">
    <location>
        <position position="305"/>
    </location>
    <ligand>
        <name>FAD</name>
        <dbReference type="ChEBI" id="CHEBI:57692"/>
    </ligand>
</feature>
<feature type="binding site" evidence="2 10 11">
    <location>
        <position position="415"/>
    </location>
    <ligand>
        <name>substrate</name>
    </ligand>
</feature>
<feature type="binding site" evidence="2 9 10 11 12">
    <location>
        <position position="503"/>
    </location>
    <ligand>
        <name>FAD</name>
        <dbReference type="ChEBI" id="CHEBI:57692"/>
    </ligand>
</feature>
<feature type="binding site" evidence="2 9 10 11 12">
    <location>
        <begin position="510"/>
        <end position="512"/>
    </location>
    <ligand>
        <name>FAD</name>
        <dbReference type="ChEBI" id="CHEBI:57692"/>
    </ligand>
</feature>
<feature type="binding site" evidence="2 10 11">
    <location>
        <position position="510"/>
    </location>
    <ligand>
        <name>substrate</name>
    </ligand>
</feature>
<feature type="strand" evidence="13">
    <location>
        <begin position="58"/>
        <end position="62"/>
    </location>
</feature>
<feature type="helix" evidence="13">
    <location>
        <begin position="66"/>
        <end position="77"/>
    </location>
</feature>
<feature type="strand" evidence="13">
    <location>
        <begin position="81"/>
        <end position="85"/>
    </location>
</feature>
<feature type="strand" evidence="13">
    <location>
        <begin position="87"/>
        <end position="91"/>
    </location>
</feature>
<feature type="strand" evidence="13">
    <location>
        <begin position="97"/>
        <end position="99"/>
    </location>
</feature>
<feature type="strand" evidence="13">
    <location>
        <begin position="103"/>
        <end position="105"/>
    </location>
</feature>
<feature type="strand" evidence="13">
    <location>
        <begin position="111"/>
        <end position="113"/>
    </location>
</feature>
<feature type="strand" evidence="13">
    <location>
        <begin position="121"/>
        <end position="125"/>
    </location>
</feature>
<feature type="helix" evidence="13">
    <location>
        <begin position="135"/>
        <end position="142"/>
    </location>
</feature>
<feature type="strand" evidence="13">
    <location>
        <begin position="146"/>
        <end position="149"/>
    </location>
</feature>
<feature type="strand" evidence="13">
    <location>
        <begin position="156"/>
        <end position="159"/>
    </location>
</feature>
<feature type="turn" evidence="13">
    <location>
        <begin position="165"/>
        <end position="168"/>
    </location>
</feature>
<feature type="helix" evidence="13">
    <location>
        <begin position="173"/>
        <end position="194"/>
    </location>
</feature>
<feature type="turn" evidence="13">
    <location>
        <begin position="195"/>
        <end position="200"/>
    </location>
</feature>
<feature type="helix" evidence="13">
    <location>
        <begin position="203"/>
        <end position="216"/>
    </location>
</feature>
<feature type="helix" evidence="13">
    <location>
        <begin position="229"/>
        <end position="231"/>
    </location>
</feature>
<feature type="strand" evidence="13">
    <location>
        <begin position="233"/>
        <end position="235"/>
    </location>
</feature>
<feature type="helix" evidence="13">
    <location>
        <begin position="252"/>
        <end position="258"/>
    </location>
</feature>
<feature type="turn" evidence="13">
    <location>
        <begin position="259"/>
        <end position="263"/>
    </location>
</feature>
<feature type="helix" evidence="13">
    <location>
        <begin position="264"/>
        <end position="268"/>
    </location>
</feature>
<feature type="turn" evidence="13">
    <location>
        <begin position="270"/>
        <end position="272"/>
    </location>
</feature>
<feature type="strand" evidence="13">
    <location>
        <begin position="273"/>
        <end position="279"/>
    </location>
</feature>
<feature type="helix" evidence="13">
    <location>
        <begin position="285"/>
        <end position="294"/>
    </location>
</feature>
<feature type="helix" evidence="13">
    <location>
        <begin position="296"/>
        <end position="298"/>
    </location>
</feature>
<feature type="strand" evidence="14">
    <location>
        <begin position="299"/>
        <end position="302"/>
    </location>
</feature>
<feature type="strand" evidence="13">
    <location>
        <begin position="304"/>
        <end position="311"/>
    </location>
</feature>
<feature type="strand" evidence="13">
    <location>
        <begin position="314"/>
        <end position="321"/>
    </location>
</feature>
<feature type="strand" evidence="13">
    <location>
        <begin position="324"/>
        <end position="335"/>
    </location>
</feature>
<feature type="helix" evidence="13">
    <location>
        <begin position="339"/>
        <end position="342"/>
    </location>
</feature>
<feature type="strand" evidence="13">
    <location>
        <begin position="345"/>
        <end position="347"/>
    </location>
</feature>
<feature type="helix" evidence="13">
    <location>
        <begin position="351"/>
        <end position="358"/>
    </location>
</feature>
<feature type="strand" evidence="13">
    <location>
        <begin position="365"/>
        <end position="374"/>
    </location>
</feature>
<feature type="helix" evidence="13">
    <location>
        <begin position="376"/>
        <end position="379"/>
    </location>
</feature>
<feature type="strand" evidence="13">
    <location>
        <begin position="387"/>
        <end position="392"/>
    </location>
</feature>
<feature type="strand" evidence="13">
    <location>
        <begin position="396"/>
        <end position="398"/>
    </location>
</feature>
<feature type="strand" evidence="13">
    <location>
        <begin position="401"/>
        <end position="403"/>
    </location>
</feature>
<feature type="strand" evidence="13">
    <location>
        <begin position="409"/>
        <end position="417"/>
    </location>
</feature>
<feature type="helix" evidence="13">
    <location>
        <begin position="419"/>
        <end position="425"/>
    </location>
</feature>
<feature type="helix" evidence="13">
    <location>
        <begin position="429"/>
        <end position="444"/>
    </location>
</feature>
<feature type="helix" evidence="13">
    <location>
        <begin position="446"/>
        <end position="449"/>
    </location>
</feature>
<feature type="strand" evidence="13">
    <location>
        <begin position="450"/>
        <end position="459"/>
    </location>
</feature>
<feature type="helix" evidence="13">
    <location>
        <begin position="460"/>
        <end position="462"/>
    </location>
</feature>
<feature type="turn" evidence="13">
    <location>
        <begin position="464"/>
        <end position="466"/>
    </location>
</feature>
<feature type="strand" evidence="14">
    <location>
        <begin position="467"/>
        <end position="470"/>
    </location>
</feature>
<feature type="helix" evidence="13">
    <location>
        <begin position="486"/>
        <end position="491"/>
    </location>
</feature>
<feature type="strand" evidence="13">
    <location>
        <begin position="498"/>
        <end position="500"/>
    </location>
</feature>
<feature type="helix" evidence="13">
    <location>
        <begin position="503"/>
        <end position="505"/>
    </location>
</feature>
<feature type="strand" evidence="13">
    <location>
        <begin position="506"/>
        <end position="508"/>
    </location>
</feature>
<feature type="helix" evidence="13">
    <location>
        <begin position="512"/>
        <end position="531"/>
    </location>
</feature>
<protein>
    <recommendedName>
        <fullName evidence="4 5">L-amino acid oxidase</fullName>
        <shortName evidence="5">L-AAO</shortName>
        <shortName>LAO</shortName>
        <shortName evidence="4">roLAAO</shortName>
        <ecNumber evidence="3">1.4.3.2</ecNumber>
    </recommendedName>
</protein>
<name>OXLA_RHOOP</name>
<comment type="function">
    <text evidence="3">Catalyzes an oxidative deamination of basic, hydrophobic and aromatic L-amino acids, thus producing hydrogen peroxide that may contribute to the diverse toxic effects of this enzyme (Ref.1). Is active on most L-amino acid (39 on 43 tested) with the exception of L-Thr, L-Pro, and L-Gly (Ref.1).</text>
</comment>
<comment type="catalytic activity">
    <reaction evidence="3">
        <text>an L-alpha-amino acid + O2 + H2O = a 2-oxocarboxylate + H2O2 + NH4(+)</text>
        <dbReference type="Rhea" id="RHEA:13781"/>
        <dbReference type="ChEBI" id="CHEBI:15377"/>
        <dbReference type="ChEBI" id="CHEBI:15379"/>
        <dbReference type="ChEBI" id="CHEBI:16240"/>
        <dbReference type="ChEBI" id="CHEBI:28938"/>
        <dbReference type="ChEBI" id="CHEBI:35179"/>
        <dbReference type="ChEBI" id="CHEBI:59869"/>
        <dbReference type="EC" id="1.4.3.2"/>
    </reaction>
</comment>
<comment type="catalytic activity">
    <reaction evidence="3">
        <text>L-asparagine + O2 + H2O = 2-oxosuccinamate + H2O2 + NH4(+)</text>
        <dbReference type="Rhea" id="RHEA:61224"/>
        <dbReference type="ChEBI" id="CHEBI:15377"/>
        <dbReference type="ChEBI" id="CHEBI:15379"/>
        <dbReference type="ChEBI" id="CHEBI:16240"/>
        <dbReference type="ChEBI" id="CHEBI:28938"/>
        <dbReference type="ChEBI" id="CHEBI:57735"/>
        <dbReference type="ChEBI" id="CHEBI:58048"/>
    </reaction>
</comment>
<comment type="catalytic activity">
    <reaction evidence="3">
        <text>L-methionine + O2 + H2O = 4-methylsulfanyl-2-oxobutanoate + H2O2 + NH4(+)</text>
        <dbReference type="Rhea" id="RHEA:61236"/>
        <dbReference type="ChEBI" id="CHEBI:15377"/>
        <dbReference type="ChEBI" id="CHEBI:15379"/>
        <dbReference type="ChEBI" id="CHEBI:16240"/>
        <dbReference type="ChEBI" id="CHEBI:16723"/>
        <dbReference type="ChEBI" id="CHEBI:28938"/>
        <dbReference type="ChEBI" id="CHEBI:57844"/>
    </reaction>
</comment>
<comment type="catalytic activity">
    <reaction evidence="3">
        <text>L-phenylalanine + O2 + H2O = 3-phenylpyruvate + H2O2 + NH4(+)</text>
        <dbReference type="Rhea" id="RHEA:61240"/>
        <dbReference type="ChEBI" id="CHEBI:15377"/>
        <dbReference type="ChEBI" id="CHEBI:15379"/>
        <dbReference type="ChEBI" id="CHEBI:16240"/>
        <dbReference type="ChEBI" id="CHEBI:18005"/>
        <dbReference type="ChEBI" id="CHEBI:28938"/>
        <dbReference type="ChEBI" id="CHEBI:58095"/>
    </reaction>
</comment>
<comment type="catalytic activity">
    <reaction evidence="3">
        <text>L-tyrosine + O2 + H2O = 3-(4-hydroxyphenyl)pyruvate + H2O2 + NH4(+)</text>
        <dbReference type="Rhea" id="RHEA:61248"/>
        <dbReference type="ChEBI" id="CHEBI:15377"/>
        <dbReference type="ChEBI" id="CHEBI:15379"/>
        <dbReference type="ChEBI" id="CHEBI:16240"/>
        <dbReference type="ChEBI" id="CHEBI:28938"/>
        <dbReference type="ChEBI" id="CHEBI:36242"/>
        <dbReference type="ChEBI" id="CHEBI:58315"/>
    </reaction>
</comment>
<comment type="catalytic activity">
    <reaction evidence="3">
        <text>L-glutamine + O2 + H2O = 2-oxoglutaramate + H2O2 + NH4(+)</text>
        <dbReference type="Rhea" id="RHEA:61260"/>
        <dbReference type="ChEBI" id="CHEBI:15377"/>
        <dbReference type="ChEBI" id="CHEBI:15379"/>
        <dbReference type="ChEBI" id="CHEBI:16240"/>
        <dbReference type="ChEBI" id="CHEBI:16769"/>
        <dbReference type="ChEBI" id="CHEBI:28938"/>
        <dbReference type="ChEBI" id="CHEBI:58359"/>
    </reaction>
</comment>
<comment type="catalytic activity">
    <reaction evidence="3">
        <text>L-alanine + O2 + H2O = pyruvate + H2O2 + NH4(+)</text>
        <dbReference type="Rhea" id="RHEA:61264"/>
        <dbReference type="ChEBI" id="CHEBI:15361"/>
        <dbReference type="ChEBI" id="CHEBI:15377"/>
        <dbReference type="ChEBI" id="CHEBI:15379"/>
        <dbReference type="ChEBI" id="CHEBI:16240"/>
        <dbReference type="ChEBI" id="CHEBI:28938"/>
        <dbReference type="ChEBI" id="CHEBI:57972"/>
    </reaction>
</comment>
<comment type="catalytic activity">
    <reaction evidence="3">
        <text>L-leucine + O2 + H2O = 4-methyl-2-oxopentanoate + H2O2 + NH4(+)</text>
        <dbReference type="Rhea" id="RHEA:60996"/>
        <dbReference type="ChEBI" id="CHEBI:15377"/>
        <dbReference type="ChEBI" id="CHEBI:15379"/>
        <dbReference type="ChEBI" id="CHEBI:16240"/>
        <dbReference type="ChEBI" id="CHEBI:17865"/>
        <dbReference type="ChEBI" id="CHEBI:28938"/>
        <dbReference type="ChEBI" id="CHEBI:57427"/>
    </reaction>
</comment>
<comment type="catalytic activity">
    <reaction evidence="3">
        <text>L-lysine + O2 + H2O = 6-amino-2-oxohexanoate + H2O2 + NH4(+)</text>
        <dbReference type="Rhea" id="RHEA:14437"/>
        <dbReference type="ChEBI" id="CHEBI:15377"/>
        <dbReference type="ChEBI" id="CHEBI:15379"/>
        <dbReference type="ChEBI" id="CHEBI:16240"/>
        <dbReference type="ChEBI" id="CHEBI:28938"/>
        <dbReference type="ChEBI" id="CHEBI:32551"/>
        <dbReference type="ChEBI" id="CHEBI:58183"/>
    </reaction>
</comment>
<comment type="catalytic activity">
    <reaction evidence="3">
        <text>L-arginine + O2 + H2O = 5-guanidino-2-oxopentanoate + H2O2 + NH4(+)</text>
        <dbReference type="Rhea" id="RHEA:51404"/>
        <dbReference type="ChEBI" id="CHEBI:15377"/>
        <dbReference type="ChEBI" id="CHEBI:15379"/>
        <dbReference type="ChEBI" id="CHEBI:16240"/>
        <dbReference type="ChEBI" id="CHEBI:28938"/>
        <dbReference type="ChEBI" id="CHEBI:32682"/>
        <dbReference type="ChEBI" id="CHEBI:58489"/>
    </reaction>
</comment>
<comment type="catalytic activity">
    <reaction evidence="3">
        <text>L-glutamate + O2 + H2O = H2O2 + 2-oxoglutarate + NH4(+)</text>
        <dbReference type="Rhea" id="RHEA:20728"/>
        <dbReference type="ChEBI" id="CHEBI:15377"/>
        <dbReference type="ChEBI" id="CHEBI:15379"/>
        <dbReference type="ChEBI" id="CHEBI:16240"/>
        <dbReference type="ChEBI" id="CHEBI:16810"/>
        <dbReference type="ChEBI" id="CHEBI:28938"/>
        <dbReference type="ChEBI" id="CHEBI:29985"/>
    </reaction>
</comment>
<comment type="catalytic activity">
    <reaction evidence="3">
        <text>L-cystine + O2 + H2O = (2R)-2-amino-2-carboxylatoethyl-disulfanyl-oxopropanoate + H2O2 + NH4(+)</text>
        <dbReference type="Rhea" id="RHEA:61284"/>
        <dbReference type="ChEBI" id="CHEBI:15377"/>
        <dbReference type="ChEBI" id="CHEBI:15379"/>
        <dbReference type="ChEBI" id="CHEBI:16240"/>
        <dbReference type="ChEBI" id="CHEBI:28938"/>
        <dbReference type="ChEBI" id="CHEBI:35491"/>
        <dbReference type="ChEBI" id="CHEBI:144484"/>
    </reaction>
</comment>
<comment type="catalytic activity">
    <reaction evidence="3">
        <text>L-serine + O2 + H2O = 3-hydroxypyruvate + H2O2 + NH4(+)</text>
        <dbReference type="Rhea" id="RHEA:61344"/>
        <dbReference type="ChEBI" id="CHEBI:15377"/>
        <dbReference type="ChEBI" id="CHEBI:15379"/>
        <dbReference type="ChEBI" id="CHEBI:16240"/>
        <dbReference type="ChEBI" id="CHEBI:17180"/>
        <dbReference type="ChEBI" id="CHEBI:28938"/>
        <dbReference type="ChEBI" id="CHEBI:33384"/>
    </reaction>
</comment>
<comment type="cofactor">
    <cofactor evidence="2 3">
        <name>FAD</name>
        <dbReference type="ChEBI" id="CHEBI:57692"/>
    </cofactor>
    <text evidence="2 3">Binds 1 FAD per subunit.</text>
</comment>
<comment type="biophysicochemical properties">
    <kinetics>
        <KM evidence="3">0.019 mM for L-Tyr</KM>
        <KM evidence="3">0.07 mM for L-Arg</KM>
        <KM evidence="3">0.026 mM for L-norleucine</KM>
        <KM evidence="3">0.034 mM for L-ornithine</KM>
        <KM evidence="3">0.022 mM for L-Phe</KM>
        <KM evidence="3">0.028 mM for L-Leu</KM>
        <KM evidence="3">0.039 mM for L-Met</KM>
        <KM evidence="3">0.026 mM for L-citrulline</KM>
        <KM evidence="3">0.028 mM for L-Asn</KM>
        <KM evidence="3">0.085 mM for L-Gln</KM>
        <KM evidence="3">0.274 mM for L-Ala</KM>
        <KM evidence="3">0.015 mM for L-Lys</KM>
        <KM evidence="3">5.11 mM for L-Ile</KM>
        <KM evidence="3">0.411 mM for L-Glu</KM>
        <KM evidence="3">3.73 mM for L-Val</KM>
        <KM evidence="3">1.36 mM for L-Ser</KM>
        <Vmax evidence="3">9.69 umol/min/mg enzyme toward L-Tyr</Vmax>
        <Vmax evidence="3">8.12 umol/min/mg enzyme toward L-Arg</Vmax>
        <Vmax evidence="3">7.55 umol/min/mg enzyme toward L-norleucine</Vmax>
        <Vmax evidence="3">7.48 umol/min/mg enzyme toward L-ornithine</Vmax>
        <Vmax evidence="3">6.97 umol/min/mg enzyme toward L-Phe</Vmax>
        <Vmax evidence="3">6.45 umol/min/mg enzyme toward L-Leu</Vmax>
        <Vmax evidence="3">6.43 umol/min/mg enzyme toward L-Met</Vmax>
        <Vmax evidence="3">5.47 umol/min/mg enzyme toward L-citrulline</Vmax>
        <Vmax evidence="3">5.37 umol/min/mg enzyme toward L-Asn</Vmax>
        <Vmax evidence="3">5.06 umol/min/mg enzyme toward L-Gln</Vmax>
        <Vmax evidence="3">4.27 umol/min/mg enzyme toward L-Ala</Vmax>
        <Vmax evidence="3">3.56 umol/min/mg enzyme toward L-Lys</Vmax>
        <Vmax evidence="3">2.84 umol/min/mg enzyme toward L-Ile</Vmax>
        <Vmax evidence="3">2.32 umol/min/mg enzyme toward L-Glu</Vmax>
        <Vmax evidence="3">1.93 umol/min/mg enzyme toward L-Val</Vmax>
        <Vmax evidence="3">4.36 umol/min/mg enzyme toward L-Ser</Vmax>
    </kinetics>
    <phDependence>
        <text evidence="3">Optimum pH is 8-9.</text>
    </phDependence>
</comment>
<comment type="subunit">
    <text evidence="3">Homodimer; non-covalently linked.</text>
</comment>
<comment type="subcellular location">
    <subcellularLocation>
        <location evidence="7">Cytoplasm</location>
    </subcellularLocation>
    <text evidence="3">Unexpectedly, is not secreted into the medium.</text>
</comment>
<comment type="PTM">
    <text evidence="1">Predicted to be exported by the Tat system.</text>
</comment>
<comment type="PTM">
    <text evidence="2">Not glycosylated.</text>
</comment>
<comment type="biotechnology">
    <text evidence="7">Can be used for the preparation of D-amino acids by resolving racemic amino acid mixtures and for the production of alpha-keto acids.</text>
</comment>
<comment type="similarity">
    <text evidence="6">Belongs to the flavin monoamine oxidase family. FIG1 subfamily.</text>
</comment>
<evidence type="ECO:0000255" key="1">
    <source>
        <dbReference type="PROSITE-ProRule" id="PRU00648"/>
    </source>
</evidence>
<evidence type="ECO:0000269" key="2">
    <source>
    </source>
</evidence>
<evidence type="ECO:0000269" key="3">
    <source ref="1"/>
</evidence>
<evidence type="ECO:0000303" key="4">
    <source>
    </source>
</evidence>
<evidence type="ECO:0000303" key="5">
    <source ref="1"/>
</evidence>
<evidence type="ECO:0000305" key="6"/>
<evidence type="ECO:0000305" key="7">
    <source ref="1"/>
</evidence>
<evidence type="ECO:0000312" key="8">
    <source>
        <dbReference type="EMBL" id="AAL14831.1"/>
    </source>
</evidence>
<evidence type="ECO:0007744" key="9">
    <source>
        <dbReference type="PDB" id="2JAE"/>
    </source>
</evidence>
<evidence type="ECO:0007744" key="10">
    <source>
        <dbReference type="PDB" id="2JB1"/>
    </source>
</evidence>
<evidence type="ECO:0007744" key="11">
    <source>
        <dbReference type="PDB" id="2JB2"/>
    </source>
</evidence>
<evidence type="ECO:0007744" key="12">
    <source>
        <dbReference type="PDB" id="2JB3"/>
    </source>
</evidence>
<evidence type="ECO:0007829" key="13">
    <source>
        <dbReference type="PDB" id="2JAE"/>
    </source>
</evidence>
<evidence type="ECO:0007829" key="14">
    <source>
        <dbReference type="PDB" id="2JB2"/>
    </source>
</evidence>
<sequence length="534" mass="57805">MAFTRRSFMKGLGATGGAGLAYGAMSTLGLAPSTAAPARTFQPLAAGDLIGKVKGSHSVVVLGGGPAGLCSAFELQKAGYKVTVLEARTRPGGRVWTARGGSEETDLSGETQKCTFSEGHFYNVGATRIPQSHITLDYCRELGVEIQGFGNQNANTFVNYQSDTSLSGQSVTYRAAKADTFGYMSELLKKATDQGALDQVLSREDKDALSEFLSDFGDLSDDGRYLGSSRRGYDSEPGAGLNFGTEKKPFAMQEVIRSGIGRNFSFDFGYDQAMMMFTPVGGMDRIYYAFQDRIGTDNIVFGAEVTSMKNVSEGVTVEYTAGGSKKSITADYAICTIPPHLVGRLQNNLPGDVLTALKAAKPSSSGKLGIEYSRRWWETEDRIYGGASNTDKDISQIMFPYDHYNSDRGVVVAYYSSGKRQEAFESLTHRQRLAKAIAEGSEIHGEKYTRDISSSFSGSWRRTKYSESAWANWAGSGGSHGGAATPEYEKLLEPVDKIYFAGDHLSNAIAWQHGALTSARDVVTHIHERVAQEA</sequence>
<reference evidence="8" key="1">
    <citation type="journal article" date="2002" name="Enzyme Microb. Technol.">
        <title>A new bacterial L-amino acid oxidase with a broad substrate specificity: purification and characterization.</title>
        <authorList>
            <person name="Geueke B."/>
            <person name="Hummel W."/>
        </authorList>
    </citation>
    <scope>NUCLEOTIDE SEQUENCE [GENOMIC DNA]</scope>
    <scope>PARTIAL PROTEIN SEQUENCE</scope>
    <scope>FUNCTION</scope>
    <scope>CATALYTIC ACTIVITY</scope>
    <scope>SUBSTRATE SPECIFICITY</scope>
    <scope>COFACTOR</scope>
    <scope>BIOPHYSICOCHEMICAL PROPERTIES</scope>
    <scope>SUBUNIT</scope>
    <scope>BIOTECHNOLOGY</scope>
    <source>
        <strain>DSM 43250</strain>
    </source>
</reference>
<reference evidence="9 10 11" key="2">
    <citation type="journal article" date="2007" name="J. Mol. Biol.">
        <title>The structure of a bacterial L-amino acid oxidase from Rhodococcus opacus gives new evidence for the hydride mechanism for dehydrogenation.</title>
        <authorList>
            <person name="Faust A."/>
            <person name="Niefind K."/>
            <person name="Hummel W."/>
            <person name="Schomburg D."/>
        </authorList>
    </citation>
    <scope>X-RAY CRYSTALLOGRAPHY (1.25 ANGSTROMS) OF 46-534 IN COMPLEX WITH FAD AND SUBSTRATE</scope>
    <scope>COFACTOR</scope>
</reference>
<accession>Q8VPD4</accession>
<keyword id="KW-0002">3D-structure</keyword>
<keyword id="KW-0963">Cytoplasm</keyword>
<keyword id="KW-0903">Direct protein sequencing</keyword>
<keyword id="KW-0274">FAD</keyword>
<keyword id="KW-0285">Flavoprotein</keyword>
<keyword id="KW-0325">Glycoprotein</keyword>
<keyword id="KW-0547">Nucleotide-binding</keyword>
<keyword id="KW-0560">Oxidoreductase</keyword>
<keyword id="KW-0732">Signal</keyword>